<accession>O35885</accession>
<accession>Q9WUJ7</accession>
<dbReference type="EMBL" id="U77628">
    <property type="protein sequence ID" value="AAB86992.1"/>
    <property type="molecule type" value="Genomic_DNA"/>
</dbReference>
<dbReference type="EMBL" id="AF139595">
    <property type="protein sequence ID" value="AAD33794.1"/>
    <property type="molecule type" value="Genomic_DNA"/>
</dbReference>
<dbReference type="EMBL" id="AJ251835">
    <property type="protein sequence ID" value="CAB94773.1"/>
    <property type="molecule type" value="Genomic_DNA"/>
</dbReference>
<dbReference type="EMBL" id="BC019520">
    <property type="protein sequence ID" value="AAH19520.1"/>
    <property type="molecule type" value="mRNA"/>
</dbReference>
<dbReference type="CCDS" id="CCDS40194.1"/>
<dbReference type="RefSeq" id="NP_032580.2">
    <property type="nucleotide sequence ID" value="NM_008554.3"/>
</dbReference>
<dbReference type="RefSeq" id="XP_006508561.1">
    <property type="nucleotide sequence ID" value="XM_006508498.3"/>
</dbReference>
<dbReference type="RefSeq" id="XP_011240286.1">
    <property type="nucleotide sequence ID" value="XM_011241984.2"/>
</dbReference>
<dbReference type="SMR" id="O35885"/>
<dbReference type="FunCoup" id="O35885">
    <property type="interactions" value="253"/>
</dbReference>
<dbReference type="STRING" id="10090.ENSMUSP00000009392"/>
<dbReference type="PhosphoSitePlus" id="O35885"/>
<dbReference type="PaxDb" id="10090-ENSMUSP00000009392"/>
<dbReference type="ProteomicsDB" id="277075"/>
<dbReference type="Antibodypedia" id="42100">
    <property type="antibodies" value="215 antibodies from 29 providers"/>
</dbReference>
<dbReference type="DNASU" id="17173"/>
<dbReference type="Ensembl" id="ENSMUST00000009392.6">
    <property type="protein sequence ID" value="ENSMUSP00000009392.5"/>
    <property type="gene ID" value="ENSMUSG00000009248.7"/>
</dbReference>
<dbReference type="GeneID" id="17173"/>
<dbReference type="KEGG" id="mmu:17173"/>
<dbReference type="UCSC" id="uc009koj.2">
    <property type="organism name" value="mouse"/>
</dbReference>
<dbReference type="AGR" id="MGI:96920"/>
<dbReference type="CTD" id="430"/>
<dbReference type="MGI" id="MGI:96920">
    <property type="gene designation" value="Ascl2"/>
</dbReference>
<dbReference type="VEuPathDB" id="HostDB:ENSMUSG00000009248"/>
<dbReference type="eggNOG" id="KOG4029">
    <property type="taxonomic scope" value="Eukaryota"/>
</dbReference>
<dbReference type="GeneTree" id="ENSGT00940000163041"/>
<dbReference type="HOGENOM" id="CLU_063523_3_0_1"/>
<dbReference type="InParanoid" id="O35885"/>
<dbReference type="OMA" id="ACPRESC"/>
<dbReference type="OrthoDB" id="5976910at2759"/>
<dbReference type="PhylomeDB" id="O35885"/>
<dbReference type="TreeFam" id="TF322889"/>
<dbReference type="BioGRID-ORCS" id="17173">
    <property type="hits" value="1 hit in 79 CRISPR screens"/>
</dbReference>
<dbReference type="PRO" id="PR:O35885"/>
<dbReference type="Proteomes" id="UP000000589">
    <property type="component" value="Chromosome 7"/>
</dbReference>
<dbReference type="RNAct" id="O35885">
    <property type="molecule type" value="protein"/>
</dbReference>
<dbReference type="Bgee" id="ENSMUSG00000009248">
    <property type="expression patterns" value="Expressed in trophectoderm and 98 other cell types or tissues"/>
</dbReference>
<dbReference type="ExpressionAtlas" id="O35885">
    <property type="expression patterns" value="baseline and differential"/>
</dbReference>
<dbReference type="GO" id="GO:0005737">
    <property type="term" value="C:cytoplasm"/>
    <property type="evidence" value="ECO:0000314"/>
    <property type="project" value="MGI"/>
</dbReference>
<dbReference type="GO" id="GO:0005634">
    <property type="term" value="C:nucleus"/>
    <property type="evidence" value="ECO:0000314"/>
    <property type="project" value="MGI"/>
</dbReference>
<dbReference type="GO" id="GO:0043425">
    <property type="term" value="F:bHLH transcription factor binding"/>
    <property type="evidence" value="ECO:0000353"/>
    <property type="project" value="UniProtKB"/>
</dbReference>
<dbReference type="GO" id="GO:0001228">
    <property type="term" value="F:DNA-binding transcription activator activity, RNA polymerase II-specific"/>
    <property type="evidence" value="ECO:0000314"/>
    <property type="project" value="UniProtKB"/>
</dbReference>
<dbReference type="GO" id="GO:0001227">
    <property type="term" value="F:DNA-binding transcription repressor activity, RNA polymerase II-specific"/>
    <property type="evidence" value="ECO:0000315"/>
    <property type="project" value="UniProtKB"/>
</dbReference>
<dbReference type="GO" id="GO:0070888">
    <property type="term" value="F:E-box binding"/>
    <property type="evidence" value="ECO:0007669"/>
    <property type="project" value="Ensembl"/>
</dbReference>
<dbReference type="GO" id="GO:0046983">
    <property type="term" value="F:protein dimerization activity"/>
    <property type="evidence" value="ECO:0007669"/>
    <property type="project" value="InterPro"/>
</dbReference>
<dbReference type="GO" id="GO:0000977">
    <property type="term" value="F:RNA polymerase II transcription regulatory region sequence-specific DNA binding"/>
    <property type="evidence" value="ECO:0000315"/>
    <property type="project" value="UniProtKB"/>
</dbReference>
<dbReference type="GO" id="GO:0043565">
    <property type="term" value="F:sequence-specific DNA binding"/>
    <property type="evidence" value="ECO:0000314"/>
    <property type="project" value="MGI"/>
</dbReference>
<dbReference type="GO" id="GO:0030154">
    <property type="term" value="P:cell differentiation"/>
    <property type="evidence" value="ECO:0000315"/>
    <property type="project" value="MGI"/>
</dbReference>
<dbReference type="GO" id="GO:0060719">
    <property type="term" value="P:chorionic trophoblast cell development"/>
    <property type="evidence" value="ECO:0000315"/>
    <property type="project" value="UniProtKB"/>
</dbReference>
<dbReference type="GO" id="GO:0001701">
    <property type="term" value="P:in utero embryonic development"/>
    <property type="evidence" value="ECO:0000315"/>
    <property type="project" value="MGI"/>
</dbReference>
<dbReference type="GO" id="GO:0010626">
    <property type="term" value="P:negative regulation of Schwann cell proliferation"/>
    <property type="evidence" value="ECO:0007669"/>
    <property type="project" value="Ensembl"/>
</dbReference>
<dbReference type="GO" id="GO:0045626">
    <property type="term" value="P:negative regulation of T-helper 1 cell differentiation"/>
    <property type="evidence" value="ECO:0000315"/>
    <property type="project" value="UniProtKB"/>
</dbReference>
<dbReference type="GO" id="GO:2000320">
    <property type="term" value="P:negative regulation of T-helper 17 cell differentiation"/>
    <property type="evidence" value="ECO:0000315"/>
    <property type="project" value="UniProtKB"/>
</dbReference>
<dbReference type="GO" id="GO:0045629">
    <property type="term" value="P:negative regulation of T-helper 2 cell differentiation"/>
    <property type="evidence" value="ECO:0000315"/>
    <property type="project" value="UniProtKB"/>
</dbReference>
<dbReference type="GO" id="GO:0000122">
    <property type="term" value="P:negative regulation of transcription by RNA polymerase II"/>
    <property type="evidence" value="ECO:0000315"/>
    <property type="project" value="UniProtKB"/>
</dbReference>
<dbReference type="GO" id="GO:0007399">
    <property type="term" value="P:nervous system development"/>
    <property type="evidence" value="ECO:0007669"/>
    <property type="project" value="UniProtKB-KW"/>
</dbReference>
<dbReference type="GO" id="GO:0001890">
    <property type="term" value="P:placenta development"/>
    <property type="evidence" value="ECO:0000315"/>
    <property type="project" value="MGI"/>
</dbReference>
<dbReference type="GO" id="GO:2000406">
    <property type="term" value="P:positive regulation of T cell migration"/>
    <property type="evidence" value="ECO:0000315"/>
    <property type="project" value="UniProtKB"/>
</dbReference>
<dbReference type="GO" id="GO:0045944">
    <property type="term" value="P:positive regulation of transcription by RNA polymerase II"/>
    <property type="evidence" value="ECO:0000314"/>
    <property type="project" value="UniProtKB"/>
</dbReference>
<dbReference type="GO" id="GO:0006357">
    <property type="term" value="P:regulation of transcription by RNA polymerase II"/>
    <property type="evidence" value="ECO:0000314"/>
    <property type="project" value="MGI"/>
</dbReference>
<dbReference type="GO" id="GO:0001666">
    <property type="term" value="P:response to hypoxia"/>
    <property type="evidence" value="ECO:0007669"/>
    <property type="project" value="Ensembl"/>
</dbReference>
<dbReference type="GO" id="GO:0035019">
    <property type="term" value="P:somatic stem cell population maintenance"/>
    <property type="evidence" value="ECO:0000315"/>
    <property type="project" value="MGI"/>
</dbReference>
<dbReference type="GO" id="GO:0060708">
    <property type="term" value="P:spongiotrophoblast differentiation"/>
    <property type="evidence" value="ECO:0000315"/>
    <property type="project" value="MGI"/>
</dbReference>
<dbReference type="GO" id="GO:0019827">
    <property type="term" value="P:stem cell population maintenance"/>
    <property type="evidence" value="ECO:0000315"/>
    <property type="project" value="UniProtKB"/>
</dbReference>
<dbReference type="GO" id="GO:0030217">
    <property type="term" value="P:T cell differentiation"/>
    <property type="evidence" value="ECO:0000315"/>
    <property type="project" value="MGI"/>
</dbReference>
<dbReference type="GO" id="GO:0061470">
    <property type="term" value="P:T follicular helper cell differentiation"/>
    <property type="evidence" value="ECO:0000315"/>
    <property type="project" value="UniProtKB"/>
</dbReference>
<dbReference type="CDD" id="cd19743">
    <property type="entry name" value="bHLH_TS_ASCL2_Mash2"/>
    <property type="match status" value="1"/>
</dbReference>
<dbReference type="FunFam" id="4.10.280.10:FF:000029">
    <property type="entry name" value="Achaete-scute family bHLH transcription factor 1"/>
    <property type="match status" value="1"/>
</dbReference>
<dbReference type="Gene3D" id="4.10.280.10">
    <property type="entry name" value="Helix-loop-helix DNA-binding domain"/>
    <property type="match status" value="1"/>
</dbReference>
<dbReference type="InterPro" id="IPR011598">
    <property type="entry name" value="bHLH_dom"/>
</dbReference>
<dbReference type="InterPro" id="IPR036638">
    <property type="entry name" value="HLH_DNA-bd_sf"/>
</dbReference>
<dbReference type="InterPro" id="IPR015660">
    <property type="entry name" value="MASH1/Ascl1a-like"/>
</dbReference>
<dbReference type="PANTHER" id="PTHR13935:SF62">
    <property type="entry name" value="ACHAETE-SCUTE HOMOLOG 2"/>
    <property type="match status" value="1"/>
</dbReference>
<dbReference type="PANTHER" id="PTHR13935">
    <property type="entry name" value="ACHAETE-SCUTE TRANSCRIPTION FACTOR-RELATED"/>
    <property type="match status" value="1"/>
</dbReference>
<dbReference type="Pfam" id="PF00010">
    <property type="entry name" value="HLH"/>
    <property type="match status" value="1"/>
</dbReference>
<dbReference type="SMART" id="SM00353">
    <property type="entry name" value="HLH"/>
    <property type="match status" value="1"/>
</dbReference>
<dbReference type="SUPFAM" id="SSF47459">
    <property type="entry name" value="HLH, helix-loop-helix DNA-binding domain"/>
    <property type="match status" value="1"/>
</dbReference>
<dbReference type="PROSITE" id="PS50888">
    <property type="entry name" value="BHLH"/>
    <property type="match status" value="1"/>
</dbReference>
<sequence length="263" mass="27784">MEAHLDWYGVPGLQEASDACPRESCSSALPEAREGANVHFPPHPVPREHFSCAAPELVAGAQGLNASLMDGGALPRLMPTSSGVAGACAARRRQASPELLRCSRRRRSGATEASSSSAAVARRNERERNRVKLVNLGFQALRQHVPHGGANKKLSKVETLRSAVEYIRALQRLLAEHDAVRAALAGGLLTPATPPSDECAQPSASPASASLSCASTSPSPDRLGCSEPTSPRSAYSSEESSCEGELSPMEQELLDFSSWLGGY</sequence>
<proteinExistence type="evidence at protein level"/>
<protein>
    <recommendedName>
        <fullName>Achaete-scute homolog 2</fullName>
        <shortName>ASH-2</shortName>
        <shortName>mASH-2</shortName>
        <shortName>mASH2</shortName>
    </recommendedName>
</protein>
<name>ASCL2_MOUSE</name>
<evidence type="ECO:0000250" key="1">
    <source>
        <dbReference type="UniProtKB" id="P19360"/>
    </source>
</evidence>
<evidence type="ECO:0000255" key="2">
    <source>
        <dbReference type="PROSITE-ProRule" id="PRU00981"/>
    </source>
</evidence>
<evidence type="ECO:0000256" key="3">
    <source>
        <dbReference type="SAM" id="MobiDB-lite"/>
    </source>
</evidence>
<evidence type="ECO:0000269" key="4">
    <source>
    </source>
</evidence>
<evidence type="ECO:0000269" key="5">
    <source>
    </source>
</evidence>
<evidence type="ECO:0000269" key="6">
    <source>
    </source>
</evidence>
<evidence type="ECO:0000269" key="7">
    <source>
    </source>
</evidence>
<evidence type="ECO:0000269" key="8">
    <source>
    </source>
</evidence>
<evidence type="ECO:0000269" key="9">
    <source>
    </source>
</evidence>
<evidence type="ECO:0000269" key="10">
    <source>
    </source>
</evidence>
<evidence type="ECO:0000305" key="11"/>
<reference key="1">
    <citation type="journal article" date="1997" name="Hum. Mol. Genet.">
        <title>The human Achaete-Scute homologue 2 (ASCL2,HASH2) maps to chromosome 11p15.5, close to IGF2 and is expressed in extravillus trophoblasts.</title>
        <authorList>
            <person name="Alders M."/>
            <person name="Hodges M."/>
            <person name="Hadjantonakis A.-K."/>
            <person name="Postmus J."/>
            <person name="van Wijk I.J."/>
            <person name="Bliek J."/>
            <person name="de Meulemeester M."/>
            <person name="Westerveld A."/>
            <person name="Guillemot F."/>
            <person name="Oudejans C.B."/>
            <person name="Little P."/>
            <person name="Mannens M."/>
        </authorList>
    </citation>
    <scope>NUCLEOTIDE SEQUENCE [GENOMIC DNA]</scope>
</reference>
<reference key="2">
    <citation type="journal article" date="1999" name="Mech. Dev.">
        <title>Parental origin-specific expression of Mash2 is established at the time of implantation with its imprinting mechanism highly resistant to genome-wide demethylation.</title>
        <authorList>
            <person name="Tanaka M."/>
            <person name="Puchyr M."/>
            <person name="Gertsenstein M."/>
            <person name="Harpal K."/>
            <person name="Jaenisch R."/>
            <person name="Rossant J."/>
            <person name="Nagy A."/>
        </authorList>
    </citation>
    <scope>NUCLEOTIDE SEQUENCE [GENOMIC DNA]</scope>
</reference>
<reference key="3">
    <citation type="journal article" date="2000" name="Hum. Mol. Genet.">
        <title>Sequence conservation and variability of imprinting in the Beckwith-Wiedemann syndrome gene cluster in human and mouse.</title>
        <authorList>
            <person name="Paulsen M."/>
            <person name="El-Maarri O."/>
            <person name="Engemann S."/>
            <person name="Stroedicke M."/>
            <person name="Franck O."/>
            <person name="Davies K."/>
            <person name="Reinhardt R."/>
            <person name="Reik W."/>
            <person name="Walter J."/>
        </authorList>
    </citation>
    <scope>NUCLEOTIDE SEQUENCE [GENOMIC DNA]</scope>
    <source>
        <strain>129/Sv</strain>
    </source>
</reference>
<reference key="4">
    <citation type="journal article" date="2004" name="Genome Res.">
        <title>The status, quality, and expansion of the NIH full-length cDNA project: the Mammalian Gene Collection (MGC).</title>
        <authorList>
            <consortium name="The MGC Project Team"/>
        </authorList>
    </citation>
    <scope>NUCLEOTIDE SEQUENCE [LARGE SCALE MRNA]</scope>
    <source>
        <tissue>Liver</tissue>
    </source>
</reference>
<reference key="5">
    <citation type="journal article" date="1995" name="Nat. Genet.">
        <title>Genomic imprinting of Mash2, a mouse gene required for trophoblast development.</title>
        <authorList>
            <person name="Guillemot F."/>
            <person name="Caspary T."/>
            <person name="Tilghman S.M."/>
            <person name="Copeland N.G."/>
            <person name="Gilbert D.J."/>
            <person name="Jenkins N.A."/>
            <person name="Anderson D.J."/>
            <person name="Joyner A.L."/>
            <person name="Rossant J."/>
            <person name="Nagy A."/>
        </authorList>
    </citation>
    <scope>DISRUPTION PHENOTYPE</scope>
</reference>
<reference key="6">
    <citation type="journal article" date="1994" name="Nature">
        <title>Essential role of Mash-2 in extraembryonic development.</title>
        <authorList>
            <person name="Guillemot F."/>
            <person name="Nagy A."/>
            <person name="Auerbach A."/>
            <person name="Rossant J."/>
            <person name="Joyner A.L."/>
        </authorList>
    </citation>
    <scope>FUNCTION</scope>
    <scope>DEVELOPMENTAL STAGE</scope>
    <scope>DISRUPTION PHENOTYPE</scope>
</reference>
<reference key="7">
    <citation type="journal article" date="1998" name="Mech. Dev.">
        <title>Mash2 is expressed in oogenesis and preimplantation development but is not required for blastocyst formation.</title>
        <authorList>
            <person name="Rossant J."/>
            <person name="Guillemot F."/>
            <person name="Tanaka M."/>
            <person name="Latham K."/>
            <person name="Gertenstein M."/>
            <person name="Nagy A."/>
        </authorList>
    </citation>
    <scope>FUNCTION</scope>
    <scope>DEVELOPMENTAL STAGE</scope>
</reference>
<reference key="8">
    <citation type="journal article" date="2000" name="Mol. Cell. Biol.">
        <title>The HAND1 basic helix-loop-helix transcription factor regulates trophoblast differentiation via multiple mechanisms.</title>
        <authorList>
            <person name="Scott I.C."/>
            <person name="Anson-Cartwright L."/>
            <person name="Riley P."/>
            <person name="Reda D."/>
            <person name="Cross J.C."/>
        </authorList>
    </citation>
    <scope>FUNCTION</scope>
    <scope>SUBUNIT</scope>
    <scope>DEVELOPMENTAL STAGE</scope>
    <scope>DISRUPTION PHENOTYPE</scope>
</reference>
<reference key="9">
    <citation type="journal article" date="2014" name="Nature">
        <title>Transcription factor achaete-scute homologue 2 initiates follicular T-helper-cell development.</title>
        <authorList>
            <person name="Liu X."/>
            <person name="Chen X."/>
            <person name="Zhong B."/>
            <person name="Wang A."/>
            <person name="Wang X."/>
            <person name="Chu F."/>
            <person name="Nurieva R.I."/>
            <person name="Yan X."/>
            <person name="Chen P."/>
            <person name="van der Flier L.G."/>
            <person name="Nakatsukasa H."/>
            <person name="Neelapu S.S."/>
            <person name="Chen W."/>
            <person name="Clevers H."/>
            <person name="Tian Q."/>
            <person name="Qi H."/>
            <person name="Wei L."/>
            <person name="Dong C."/>
        </authorList>
    </citation>
    <scope>FUNCTION</scope>
    <scope>TISSUE SPECIFICITY</scope>
    <scope>INDUCTION</scope>
    <scope>DISRUPTION PHENOTYPE</scope>
</reference>
<reference key="10">
    <citation type="journal article" date="2015" name="Cell Stem Cell">
        <title>Ascl2 acts as an R-spondin/Wnt-responsive switch to control stemness in intestinal crypts.</title>
        <authorList>
            <person name="Schuijers J."/>
            <person name="Junker J.P."/>
            <person name="Mokry M."/>
            <person name="Hatzis P."/>
            <person name="Koo B.K."/>
            <person name="Sasselli V."/>
            <person name="van der Flier L.G."/>
            <person name="Cuppen E."/>
            <person name="van Oudenaarden A."/>
            <person name="Clevers H."/>
        </authorList>
    </citation>
    <scope>FUNCTION</scope>
</reference>
<reference key="11">
    <citation type="journal article" date="2018" name="Genome Res.">
        <title>Intrinsic DNA binding properties demonstrated for lineage-specifying basic helix-loop-helix transcription factors.</title>
        <authorList>
            <person name="Casey B.H."/>
            <person name="Kollipara R.K."/>
            <person name="Pozo K."/>
            <person name="Johnson J.E."/>
        </authorList>
    </citation>
    <scope>FUNCTION</scope>
</reference>
<organism>
    <name type="scientific">Mus musculus</name>
    <name type="common">Mouse</name>
    <dbReference type="NCBI Taxonomy" id="10090"/>
    <lineage>
        <taxon>Eukaryota</taxon>
        <taxon>Metazoa</taxon>
        <taxon>Chordata</taxon>
        <taxon>Craniata</taxon>
        <taxon>Vertebrata</taxon>
        <taxon>Euteleostomi</taxon>
        <taxon>Mammalia</taxon>
        <taxon>Eutheria</taxon>
        <taxon>Euarchontoglires</taxon>
        <taxon>Glires</taxon>
        <taxon>Rodentia</taxon>
        <taxon>Myomorpha</taxon>
        <taxon>Muroidea</taxon>
        <taxon>Muridae</taxon>
        <taxon>Murinae</taxon>
        <taxon>Mus</taxon>
        <taxon>Mus</taxon>
    </lineage>
</organism>
<comment type="function">
    <text evidence="1 4 5 6 7 9 10">Transcription factor (PubMed:10611232, PubMed:29500235). Binds to E-box motifs 5'-CANNTG-3' in the regulatory elements of target genes, probably as a heterodimer with another basic helix-loop-helix (bHLH) protein such as the transcription factor TCF3 (PubMed:10611232, PubMed:29500235). May bind both open and closed chromatin, acting as a pioneer transcription factor to allow other factors to bind and activate lineage-specific genes (PubMed:29500235). Required during post-implantation development for the generation of some differentiated trophoblast cell types (PubMed:8090202). Transcriptional activity of ASCL2 may be antagonised in a subset of trophoblast cells by bHLH transcription factor HAND1, perhaps by competing for dimerization with other bHLH proteins (PubMed:10611232). Involved in differentiation and function of follicular T-helper (Tfh) cells, thereby playing a role in germinal center responses; probably modulates expression of genes involved in Tfh cell function, such as BCL6 (PubMed:24463518). May also act as a suppressor of Th1-, Th2- and Th17-cell differentiation (PubMed:24463518). Induces the formation of stem cells in intestinal crypts in vitro, synergistically activating transcription of target genes, such as SOX9, together with TCF4/beta-catenin (PubMed:25620640). May form a bistable transcriptional switch, controlling expression of its own gene together with Wnt/R-spondin signaling, and thereby maintaining stem cell characteristics (PubMed:25620640). Modulates expression of target genes, including perhaps down-regulating EGR1/Krox24 and chemokine CXCL10/Mob-1 and up-regulating CXCR4 and CDKN1C/p57kip2, in Schwann cells (By similarity). May play a role in reducing proliferation of Schwann cells, perhaps acting via modulation of expression of CDKN1C (By similarity). May be dispensable for blastocyst formation and later embryonic function (PubMed:8090202, PubMed:9622625). May be involved in the determination of neuronal precursors (By similarity).</text>
</comment>
<comment type="subunit">
    <text evidence="4">Efficient DNA binding requires dimerization with another basic helix-loop-helix (bHLH) protein (PubMed:10611232). Forms heterodimers with bHLH transcription factor TCF3 (PubMed:10611232). May not heterodimerise with bHLH protein HAND1 (PubMed:10611232).</text>
</comment>
<comment type="subcellular location">
    <subcellularLocation>
        <location evidence="1">Nucleus</location>
    </subcellularLocation>
</comment>
<comment type="tissue specificity">
    <text evidence="5">Expressed in follicular T-helper (Tfh) cells.</text>
</comment>
<comment type="developmental stage">
    <text evidence="4 9 10">Both maternal and embryonic transcription (PubMed:9622625). Transcribed from both the maternal and paternal genome, at least in eight-cell stage, late morula and blastocyst (PubMed:9622625). Expressed during all stages of oogenesis, from immature oocyte to mature oocytes in the antral follicles (PubMed:9622625). Expressed at low level in late two-cell stage (49 h) zygote, increasing slightly between the late two-cell stage and the eight-cell stage (77 h), then increasing dramatically by about 10-fold at the morula stage (88 hours) (PubMed:9622625). Early egg cylinder stage embryos, at 5.5 days post coitum (dpc) show strong expression throughout the diploid ectoplacental cone (EPC) and the extraembryonic ectoderm, but no expression in the giant cells or the embryonic ectoderm or primitive endoderm (PubMed:9622625). Expressed transiently at 7.5-8.5 dpc at low levels in the embryo (PubMed:8090202). Expressed at 7.5-8.5 dpc at high levels in extra-embryonic tissues, the chorion and the EPC, but not detectable in secondary giant cells or the allantois (PubMed:10611232, PubMed:8090202, PubMed:9622625). At 9.5-10.5 dpc, expression persists in both the labyrinthine layer and the outer spongiotrophoblast layer of the placenta, with stronger expression in the spongiotrophoblast (PubMed:9622625). By 12.5 dpc, expression in the spongiotrophoblast layer is restricted to only a subset of cells (PubMed:10611232). Overall expression in the placental layers declines after 10 dpc, declining further by 15.5 dpc (PubMed:9622625).</text>
</comment>
<comment type="induction">
    <text evidence="5">Up-regulated in activated T-cells after immunization.</text>
</comment>
<comment type="disruption phenotype">
    <text evidence="4 5 8 9">Embryonic lethality between 9.5 and 10.5 days post coitum (dpc) (PubMed:7773285, PubMed:8090202). Abnormalities in extraembryonic trophoblast cell types; by 8.5 dpc, the ectoplacental cone (EPC) lacks diploid precursors and by 9.5-10.5 dpc, the spongiotrophoblast layer of the placenta is missing and the labyrinthine layer lacks normal highly vascularized organization (PubMed:7773285, PubMed:8090202). Unexpectedly, does not exacerbate trophoblast phenotype at 8.5 dpc when combined with simultaneous knockout of basic helix-loop-helix transcription factor HAND1 (PubMed:10611232). Conditional knockout targeted at cells expressing T-cell surface glycoprotein CD4 causes loss of body weight from day 3 to day 9 after influenza infection; 5-fold higher levels of viral hemagglutinin mRNA in lungs, by comparison with controls (PubMed:24463518). Lung-draining lymph nodes contain less than half normal level of follicular T-helper (Tfh) cells (PubMed:24463518). Development of Tfh cells and germinal center B-cells is reduced in the spleen (PubMed:24463518). Increased expression of TCF3/E47 in Tfh and naive T-cells (PubMed:24463518).</text>
</comment>
<comment type="miscellaneous">
    <text evidence="8">The ASCL2 locus is imprinted in mice (PubMed:7773285). Maternal inherited gene is expressed, while the paternal inherited gene is imprinted, hence silenced (PubMed:7773285). However, the paternal gene is expressed in some trophoblast cells in early postimplantation embryonic stages and almost completely extinguished by 8.5 days post coitum (dpc) (PubMed:7773285).</text>
</comment>
<keyword id="KW-0217">Developmental protein</keyword>
<keyword id="KW-0221">Differentiation</keyword>
<keyword id="KW-0238">DNA-binding</keyword>
<keyword id="KW-0524">Neurogenesis</keyword>
<keyword id="KW-0539">Nucleus</keyword>
<keyword id="KW-1185">Reference proteome</keyword>
<feature type="chain" id="PRO_0000127131" description="Achaete-scute homolog 2">
    <location>
        <begin position="1"/>
        <end position="263"/>
    </location>
</feature>
<feature type="domain" description="bHLH" evidence="2">
    <location>
        <begin position="118"/>
        <end position="170"/>
    </location>
</feature>
<feature type="region of interest" description="Disordered" evidence="3">
    <location>
        <begin position="104"/>
        <end position="126"/>
    </location>
</feature>
<feature type="region of interest" description="Disordered" evidence="3">
    <location>
        <begin position="194"/>
        <end position="248"/>
    </location>
</feature>
<feature type="compositionally biased region" description="Low complexity" evidence="3">
    <location>
        <begin position="110"/>
        <end position="121"/>
    </location>
</feature>
<feature type="compositionally biased region" description="Low complexity" evidence="3">
    <location>
        <begin position="202"/>
        <end position="220"/>
    </location>
</feature>
<feature type="compositionally biased region" description="Low complexity" evidence="3">
    <location>
        <begin position="230"/>
        <end position="247"/>
    </location>
</feature>
<feature type="sequence conflict" description="In Ref. 1; AAB86992." evidence="11" ref="1">
    <original>A</original>
    <variation>S</variation>
    <location>
        <position position="119"/>
    </location>
</feature>
<feature type="sequence conflict" description="In Ref. 1; AAB86992." evidence="11" ref="1">
    <original>A</original>
    <variation>T</variation>
    <location>
        <position position="179"/>
    </location>
</feature>
<feature type="sequence conflict" description="In Ref. 1; AAB86992." evidence="11" ref="1">
    <original>A</original>
    <variation>P</variation>
    <location>
        <position position="182"/>
    </location>
</feature>
<feature type="sequence conflict" description="In Ref. 1; AAB86992." evidence="11" ref="1">
    <original>A</original>
    <variation>T</variation>
    <location>
        <position position="200"/>
    </location>
</feature>
<feature type="sequence conflict" description="In Ref. 1; AAB86992." evidence="11" ref="1">
    <original>A</original>
    <variation>G</variation>
    <location>
        <position position="209"/>
    </location>
</feature>
<feature type="sequence conflict" description="In Ref. 1; AAB86992." evidence="11" ref="1">
    <original>PDR</original>
    <variation>RT</variation>
    <location>
        <begin position="220"/>
        <end position="222"/>
    </location>
</feature>
<gene>
    <name type="primary">Ascl2</name>
    <name type="synonym">Mash2</name>
</gene>